<name>SYDND_MYCLB</name>
<gene>
    <name evidence="1" type="primary">aspS</name>
    <name type="ordered locus">MLBr00501</name>
</gene>
<feature type="chain" id="PRO_1000199001" description="Aspartate--tRNA(Asp/Asn) ligase">
    <location>
        <begin position="1"/>
        <end position="589"/>
    </location>
</feature>
<feature type="region of interest" description="Aspartate" evidence="1">
    <location>
        <begin position="194"/>
        <end position="197"/>
    </location>
</feature>
<feature type="region of interest" description="Disordered" evidence="2">
    <location>
        <begin position="563"/>
        <end position="589"/>
    </location>
</feature>
<feature type="compositionally biased region" description="Basic and acidic residues" evidence="2">
    <location>
        <begin position="575"/>
        <end position="589"/>
    </location>
</feature>
<feature type="binding site" evidence="1">
    <location>
        <position position="170"/>
    </location>
    <ligand>
        <name>L-aspartate</name>
        <dbReference type="ChEBI" id="CHEBI:29991"/>
    </ligand>
</feature>
<feature type="binding site" evidence="1">
    <location>
        <begin position="216"/>
        <end position="218"/>
    </location>
    <ligand>
        <name>ATP</name>
        <dbReference type="ChEBI" id="CHEBI:30616"/>
    </ligand>
</feature>
<feature type="binding site" evidence="1">
    <location>
        <position position="216"/>
    </location>
    <ligand>
        <name>L-aspartate</name>
        <dbReference type="ChEBI" id="CHEBI:29991"/>
    </ligand>
</feature>
<feature type="binding site" evidence="1">
    <location>
        <position position="225"/>
    </location>
    <ligand>
        <name>ATP</name>
        <dbReference type="ChEBI" id="CHEBI:30616"/>
    </ligand>
</feature>
<feature type="binding site" evidence="1">
    <location>
        <position position="448"/>
    </location>
    <ligand>
        <name>L-aspartate</name>
        <dbReference type="ChEBI" id="CHEBI:29991"/>
    </ligand>
</feature>
<feature type="binding site" evidence="1">
    <location>
        <position position="482"/>
    </location>
    <ligand>
        <name>ATP</name>
        <dbReference type="ChEBI" id="CHEBI:30616"/>
    </ligand>
</feature>
<feature type="binding site" evidence="1">
    <location>
        <position position="489"/>
    </location>
    <ligand>
        <name>L-aspartate</name>
        <dbReference type="ChEBI" id="CHEBI:29991"/>
    </ligand>
</feature>
<feature type="binding site" evidence="1">
    <location>
        <begin position="534"/>
        <end position="537"/>
    </location>
    <ligand>
        <name>ATP</name>
        <dbReference type="ChEBI" id="CHEBI:30616"/>
    </ligand>
</feature>
<feature type="site" description="Important for tRNA non-discrimination" evidence="1">
    <location>
        <position position="31"/>
    </location>
</feature>
<feature type="site" description="Important for tRNA non-discrimination" evidence="1">
    <location>
        <position position="80"/>
    </location>
</feature>
<keyword id="KW-0030">Aminoacyl-tRNA synthetase</keyword>
<keyword id="KW-0067">ATP-binding</keyword>
<keyword id="KW-0963">Cytoplasm</keyword>
<keyword id="KW-0436">Ligase</keyword>
<keyword id="KW-0547">Nucleotide-binding</keyword>
<keyword id="KW-0648">Protein biosynthesis</keyword>
<comment type="function">
    <text evidence="1">Aspartyl-tRNA synthetase with relaxed tRNA specificity since it is able to aspartylate not only its cognate tRNA(Asp) but also tRNA(Asn). Reaction proceeds in two steps: L-aspartate is first activated by ATP to form Asp-AMP and then transferred to the acceptor end of tRNA(Asp/Asn).</text>
</comment>
<comment type="catalytic activity">
    <reaction evidence="1">
        <text>tRNA(Asx) + L-aspartate + ATP = L-aspartyl-tRNA(Asx) + AMP + diphosphate</text>
        <dbReference type="Rhea" id="RHEA:18349"/>
        <dbReference type="Rhea" id="RHEA-COMP:9710"/>
        <dbReference type="Rhea" id="RHEA-COMP:9711"/>
        <dbReference type="ChEBI" id="CHEBI:29991"/>
        <dbReference type="ChEBI" id="CHEBI:30616"/>
        <dbReference type="ChEBI" id="CHEBI:33019"/>
        <dbReference type="ChEBI" id="CHEBI:78442"/>
        <dbReference type="ChEBI" id="CHEBI:78516"/>
        <dbReference type="ChEBI" id="CHEBI:456215"/>
        <dbReference type="EC" id="6.1.1.23"/>
    </reaction>
</comment>
<comment type="subunit">
    <text evidence="1">Homodimer.</text>
</comment>
<comment type="subcellular location">
    <subcellularLocation>
        <location evidence="1">Cytoplasm</location>
    </subcellularLocation>
</comment>
<comment type="similarity">
    <text evidence="1">Belongs to the class-II aminoacyl-tRNA synthetase family. Type 1 subfamily.</text>
</comment>
<reference key="1">
    <citation type="journal article" date="2009" name="Nat. Genet.">
        <title>Comparative genomic and phylogeographic analysis of Mycobacterium leprae.</title>
        <authorList>
            <person name="Monot M."/>
            <person name="Honore N."/>
            <person name="Garnier T."/>
            <person name="Zidane N."/>
            <person name="Sherafi D."/>
            <person name="Paniz-Mondolfi A."/>
            <person name="Matsuoka M."/>
            <person name="Taylor G.M."/>
            <person name="Donoghue H.D."/>
            <person name="Bouwman A."/>
            <person name="Mays S."/>
            <person name="Watson C."/>
            <person name="Lockwood D."/>
            <person name="Khamispour A."/>
            <person name="Dowlati Y."/>
            <person name="Jianping S."/>
            <person name="Rea T.H."/>
            <person name="Vera-Cabrera L."/>
            <person name="Stefani M.M."/>
            <person name="Banu S."/>
            <person name="Macdonald M."/>
            <person name="Sapkota B.R."/>
            <person name="Spencer J.S."/>
            <person name="Thomas J."/>
            <person name="Harshman K."/>
            <person name="Singh P."/>
            <person name="Busso P."/>
            <person name="Gattiker A."/>
            <person name="Rougemont J."/>
            <person name="Brennan P.J."/>
            <person name="Cole S.T."/>
        </authorList>
    </citation>
    <scope>NUCLEOTIDE SEQUENCE [LARGE SCALE GENOMIC DNA]</scope>
    <source>
        <strain>Br4923</strain>
    </source>
</reference>
<sequence>MLRSHGAGVLRKSDAGQQVTLAGWVSRRRDHGGVIFIDLRDSSGITQAVFREPDVLAQAHRLRAEFCIAVSGVVEIRPEGNANAEIPTGDIEVNATSLTVLGESAPLPFQLDEPAGEELRLKYRYLDLRRDGPGSAIRLRSKVNATARAVLARHDFVEIETPTITRSTPEGARDFLVPARLRPGTFYALPQSPQLFKQLLMVAGMERYYQIAHCYRDEDFRADRQPEFTQLDMEMSFVDAEDVIAISEEILTELWMLIGYHIPAPIPRISYADAMRRFGSDKPDLRFGLELVECTEFFCDTTFRVFQAPYVGAVVMPGGAAQPRRTLDEWQDWAKQRGHRGLAYVLVTDDGTLGGPVAKNFSDAERSRLASHVGAEPGDCIFFSAGPAKSSRALLGAARGEIANRLGLIDPEAWAFVWVVDPPLFERADEATKVGEMAVGSGAWTAVHHAFTSPKPEFEDSIESDPGSVLADAYDIVCNGHEIGSGSVRINRRDIQERVFAVMGLEKAEAEEKFGFLLEAFTFGAPPHGGIAFGWDRTNALLAGMESIREVIAFPKTGGGVDPLTDAPASITAQQRKESGIDTKPKEVE</sequence>
<protein>
    <recommendedName>
        <fullName evidence="1">Aspartate--tRNA(Asp/Asn) ligase</fullName>
        <ecNumber evidence="1">6.1.1.23</ecNumber>
    </recommendedName>
    <alternativeName>
        <fullName evidence="1">Aspartyl-tRNA synthetase</fullName>
        <shortName evidence="1">AspRS</shortName>
    </alternativeName>
    <alternativeName>
        <fullName evidence="1">Non-discriminating aspartyl-tRNA synthetase</fullName>
        <shortName evidence="1">ND-AspRS</shortName>
    </alternativeName>
</protein>
<dbReference type="EC" id="6.1.1.23" evidence="1"/>
<dbReference type="EMBL" id="FM211192">
    <property type="protein sequence ID" value="CAR70594.1"/>
    <property type="molecule type" value="Genomic_DNA"/>
</dbReference>
<dbReference type="SMR" id="B8ZUJ3"/>
<dbReference type="KEGG" id="mlb:MLBr00501"/>
<dbReference type="HOGENOM" id="CLU_014330_3_2_11"/>
<dbReference type="Proteomes" id="UP000006900">
    <property type="component" value="Chromosome"/>
</dbReference>
<dbReference type="GO" id="GO:0005737">
    <property type="term" value="C:cytoplasm"/>
    <property type="evidence" value="ECO:0007669"/>
    <property type="project" value="UniProtKB-SubCell"/>
</dbReference>
<dbReference type="GO" id="GO:0004815">
    <property type="term" value="F:aspartate-tRNA ligase activity"/>
    <property type="evidence" value="ECO:0007669"/>
    <property type="project" value="UniProtKB-UniRule"/>
</dbReference>
<dbReference type="GO" id="GO:0050560">
    <property type="term" value="F:aspartate-tRNA(Asn) ligase activity"/>
    <property type="evidence" value="ECO:0007669"/>
    <property type="project" value="UniProtKB-EC"/>
</dbReference>
<dbReference type="GO" id="GO:0005524">
    <property type="term" value="F:ATP binding"/>
    <property type="evidence" value="ECO:0007669"/>
    <property type="project" value="UniProtKB-UniRule"/>
</dbReference>
<dbReference type="GO" id="GO:0003676">
    <property type="term" value="F:nucleic acid binding"/>
    <property type="evidence" value="ECO:0007669"/>
    <property type="project" value="InterPro"/>
</dbReference>
<dbReference type="GO" id="GO:0006422">
    <property type="term" value="P:aspartyl-tRNA aminoacylation"/>
    <property type="evidence" value="ECO:0007669"/>
    <property type="project" value="UniProtKB-UniRule"/>
</dbReference>
<dbReference type="CDD" id="cd00777">
    <property type="entry name" value="AspRS_core"/>
    <property type="match status" value="1"/>
</dbReference>
<dbReference type="CDD" id="cd04317">
    <property type="entry name" value="EcAspRS_like_N"/>
    <property type="match status" value="1"/>
</dbReference>
<dbReference type="Gene3D" id="3.30.930.10">
    <property type="entry name" value="Bira Bifunctional Protein, Domain 2"/>
    <property type="match status" value="1"/>
</dbReference>
<dbReference type="Gene3D" id="3.30.1360.30">
    <property type="entry name" value="GAD-like domain"/>
    <property type="match status" value="1"/>
</dbReference>
<dbReference type="Gene3D" id="2.40.50.140">
    <property type="entry name" value="Nucleic acid-binding proteins"/>
    <property type="match status" value="1"/>
</dbReference>
<dbReference type="HAMAP" id="MF_00044">
    <property type="entry name" value="Asp_tRNA_synth_type1"/>
    <property type="match status" value="1"/>
</dbReference>
<dbReference type="InterPro" id="IPR004364">
    <property type="entry name" value="Aa-tRNA-synt_II"/>
</dbReference>
<dbReference type="InterPro" id="IPR006195">
    <property type="entry name" value="aa-tRNA-synth_II"/>
</dbReference>
<dbReference type="InterPro" id="IPR045864">
    <property type="entry name" value="aa-tRNA-synth_II/BPL/LPL"/>
</dbReference>
<dbReference type="InterPro" id="IPR004524">
    <property type="entry name" value="Asp-tRNA-ligase_1"/>
</dbReference>
<dbReference type="InterPro" id="IPR047089">
    <property type="entry name" value="Asp-tRNA-ligase_1_N"/>
</dbReference>
<dbReference type="InterPro" id="IPR002312">
    <property type="entry name" value="Asp/Asn-tRNA-synth_IIb"/>
</dbReference>
<dbReference type="InterPro" id="IPR047090">
    <property type="entry name" value="AspRS_core"/>
</dbReference>
<dbReference type="InterPro" id="IPR004115">
    <property type="entry name" value="GAD-like_sf"/>
</dbReference>
<dbReference type="InterPro" id="IPR029351">
    <property type="entry name" value="GAD_dom"/>
</dbReference>
<dbReference type="InterPro" id="IPR012340">
    <property type="entry name" value="NA-bd_OB-fold"/>
</dbReference>
<dbReference type="InterPro" id="IPR004365">
    <property type="entry name" value="NA-bd_OB_tRNA"/>
</dbReference>
<dbReference type="NCBIfam" id="TIGR00459">
    <property type="entry name" value="aspS_bact"/>
    <property type="match status" value="1"/>
</dbReference>
<dbReference type="NCBIfam" id="NF001750">
    <property type="entry name" value="PRK00476.1"/>
    <property type="match status" value="1"/>
</dbReference>
<dbReference type="PANTHER" id="PTHR22594:SF5">
    <property type="entry name" value="ASPARTATE--TRNA LIGASE, MITOCHONDRIAL"/>
    <property type="match status" value="1"/>
</dbReference>
<dbReference type="PANTHER" id="PTHR22594">
    <property type="entry name" value="ASPARTYL/LYSYL-TRNA SYNTHETASE"/>
    <property type="match status" value="1"/>
</dbReference>
<dbReference type="Pfam" id="PF02938">
    <property type="entry name" value="GAD"/>
    <property type="match status" value="1"/>
</dbReference>
<dbReference type="Pfam" id="PF00152">
    <property type="entry name" value="tRNA-synt_2"/>
    <property type="match status" value="1"/>
</dbReference>
<dbReference type="Pfam" id="PF01336">
    <property type="entry name" value="tRNA_anti-codon"/>
    <property type="match status" value="1"/>
</dbReference>
<dbReference type="PRINTS" id="PR01042">
    <property type="entry name" value="TRNASYNTHASP"/>
</dbReference>
<dbReference type="SUPFAM" id="SSF55681">
    <property type="entry name" value="Class II aaRS and biotin synthetases"/>
    <property type="match status" value="1"/>
</dbReference>
<dbReference type="SUPFAM" id="SSF55261">
    <property type="entry name" value="GAD domain-like"/>
    <property type="match status" value="1"/>
</dbReference>
<dbReference type="SUPFAM" id="SSF50249">
    <property type="entry name" value="Nucleic acid-binding proteins"/>
    <property type="match status" value="1"/>
</dbReference>
<dbReference type="PROSITE" id="PS50862">
    <property type="entry name" value="AA_TRNA_LIGASE_II"/>
    <property type="match status" value="1"/>
</dbReference>
<organism>
    <name type="scientific">Mycobacterium leprae (strain Br4923)</name>
    <dbReference type="NCBI Taxonomy" id="561304"/>
    <lineage>
        <taxon>Bacteria</taxon>
        <taxon>Bacillati</taxon>
        <taxon>Actinomycetota</taxon>
        <taxon>Actinomycetes</taxon>
        <taxon>Mycobacteriales</taxon>
        <taxon>Mycobacteriaceae</taxon>
        <taxon>Mycobacterium</taxon>
    </lineage>
</organism>
<accession>B8ZUJ3</accession>
<evidence type="ECO:0000255" key="1">
    <source>
        <dbReference type="HAMAP-Rule" id="MF_00044"/>
    </source>
</evidence>
<evidence type="ECO:0000256" key="2">
    <source>
        <dbReference type="SAM" id="MobiDB-lite"/>
    </source>
</evidence>
<proteinExistence type="inferred from homology"/>